<protein>
    <recommendedName>
        <fullName evidence="1">Chaperonin GroEL</fullName>
        <ecNumber evidence="1">5.6.1.7</ecNumber>
    </recommendedName>
    <alternativeName>
        <fullName evidence="1">60 kDa chaperonin</fullName>
    </alternativeName>
    <alternativeName>
        <fullName evidence="1">Chaperonin-60</fullName>
        <shortName evidence="1">Cpn60</shortName>
    </alternativeName>
    <alternativeName>
        <fullName>Heat shock protein 60</fullName>
    </alternativeName>
</protein>
<organism>
    <name type="scientific">Nocardia asteroides</name>
    <dbReference type="NCBI Taxonomy" id="1824"/>
    <lineage>
        <taxon>Bacteria</taxon>
        <taxon>Bacillati</taxon>
        <taxon>Actinomycetota</taxon>
        <taxon>Actinomycetes</taxon>
        <taxon>Mycobacteriales</taxon>
        <taxon>Nocardiaceae</taxon>
        <taxon>Nocardia</taxon>
    </lineage>
</organism>
<dbReference type="EC" id="5.6.1.7" evidence="1"/>
<dbReference type="EMBL" id="AF352019">
    <property type="protein sequence ID" value="AAK31351.1"/>
    <property type="molecule type" value="Genomic_DNA"/>
</dbReference>
<dbReference type="SMR" id="Q9AFC5"/>
<dbReference type="GO" id="GO:0005737">
    <property type="term" value="C:cytoplasm"/>
    <property type="evidence" value="ECO:0007669"/>
    <property type="project" value="UniProtKB-SubCell"/>
</dbReference>
<dbReference type="GO" id="GO:0005524">
    <property type="term" value="F:ATP binding"/>
    <property type="evidence" value="ECO:0007669"/>
    <property type="project" value="UniProtKB-UniRule"/>
</dbReference>
<dbReference type="GO" id="GO:0140662">
    <property type="term" value="F:ATP-dependent protein folding chaperone"/>
    <property type="evidence" value="ECO:0007669"/>
    <property type="project" value="InterPro"/>
</dbReference>
<dbReference type="GO" id="GO:0016853">
    <property type="term" value="F:isomerase activity"/>
    <property type="evidence" value="ECO:0007669"/>
    <property type="project" value="UniProtKB-KW"/>
</dbReference>
<dbReference type="GO" id="GO:0051082">
    <property type="term" value="F:unfolded protein binding"/>
    <property type="evidence" value="ECO:0007669"/>
    <property type="project" value="UniProtKB-UniRule"/>
</dbReference>
<dbReference type="GO" id="GO:0042026">
    <property type="term" value="P:protein refolding"/>
    <property type="evidence" value="ECO:0007669"/>
    <property type="project" value="UniProtKB-UniRule"/>
</dbReference>
<dbReference type="CDD" id="cd03344">
    <property type="entry name" value="GroEL"/>
    <property type="match status" value="1"/>
</dbReference>
<dbReference type="FunFam" id="3.50.7.10:FF:000001">
    <property type="entry name" value="60 kDa chaperonin"/>
    <property type="match status" value="1"/>
</dbReference>
<dbReference type="Gene3D" id="3.50.7.10">
    <property type="entry name" value="GroEL"/>
    <property type="match status" value="1"/>
</dbReference>
<dbReference type="Gene3D" id="1.10.560.10">
    <property type="entry name" value="GroEL-like equatorial domain"/>
    <property type="match status" value="1"/>
</dbReference>
<dbReference type="Gene3D" id="3.30.260.10">
    <property type="entry name" value="TCP-1-like chaperonin intermediate domain"/>
    <property type="match status" value="1"/>
</dbReference>
<dbReference type="HAMAP" id="MF_00600">
    <property type="entry name" value="CH60"/>
    <property type="match status" value="1"/>
</dbReference>
<dbReference type="InterPro" id="IPR018370">
    <property type="entry name" value="Chaperonin_Cpn60_CS"/>
</dbReference>
<dbReference type="InterPro" id="IPR001844">
    <property type="entry name" value="Cpn60/GroEL"/>
</dbReference>
<dbReference type="InterPro" id="IPR002423">
    <property type="entry name" value="Cpn60/GroEL/TCP-1"/>
</dbReference>
<dbReference type="InterPro" id="IPR027409">
    <property type="entry name" value="GroEL-like_apical_dom_sf"/>
</dbReference>
<dbReference type="InterPro" id="IPR027413">
    <property type="entry name" value="GROEL-like_equatorial_sf"/>
</dbReference>
<dbReference type="InterPro" id="IPR027410">
    <property type="entry name" value="TCP-1-like_intermed_sf"/>
</dbReference>
<dbReference type="NCBIfam" id="TIGR02348">
    <property type="entry name" value="GroEL"/>
    <property type="match status" value="1"/>
</dbReference>
<dbReference type="NCBIfam" id="NF000592">
    <property type="entry name" value="PRK00013.1"/>
    <property type="match status" value="1"/>
</dbReference>
<dbReference type="NCBIfam" id="NF009487">
    <property type="entry name" value="PRK12849.1"/>
    <property type="match status" value="1"/>
</dbReference>
<dbReference type="NCBIfam" id="NF009488">
    <property type="entry name" value="PRK12850.1"/>
    <property type="match status" value="1"/>
</dbReference>
<dbReference type="NCBIfam" id="NF009489">
    <property type="entry name" value="PRK12851.1"/>
    <property type="match status" value="1"/>
</dbReference>
<dbReference type="PANTHER" id="PTHR45633">
    <property type="entry name" value="60 KDA HEAT SHOCK PROTEIN, MITOCHONDRIAL"/>
    <property type="match status" value="1"/>
</dbReference>
<dbReference type="Pfam" id="PF00118">
    <property type="entry name" value="Cpn60_TCP1"/>
    <property type="match status" value="1"/>
</dbReference>
<dbReference type="PRINTS" id="PR00298">
    <property type="entry name" value="CHAPERONIN60"/>
</dbReference>
<dbReference type="SUPFAM" id="SSF52029">
    <property type="entry name" value="GroEL apical domain-like"/>
    <property type="match status" value="1"/>
</dbReference>
<dbReference type="SUPFAM" id="SSF48592">
    <property type="entry name" value="GroEL equatorial domain-like"/>
    <property type="match status" value="1"/>
</dbReference>
<dbReference type="SUPFAM" id="SSF54849">
    <property type="entry name" value="GroEL-intermediate domain like"/>
    <property type="match status" value="1"/>
</dbReference>
<dbReference type="PROSITE" id="PS00296">
    <property type="entry name" value="CHAPERONINS_CPN60"/>
    <property type="match status" value="1"/>
</dbReference>
<keyword id="KW-0067">ATP-binding</keyword>
<keyword id="KW-0143">Chaperone</keyword>
<keyword id="KW-0963">Cytoplasm</keyword>
<keyword id="KW-0413">Isomerase</keyword>
<keyword id="KW-0547">Nucleotide-binding</keyword>
<name>CH60_NOCAS</name>
<reference key="1">
    <citation type="submission" date="2001-02" db="EMBL/GenBank/DDBJ databases">
        <authorList>
            <person name="Zimmermann O.S."/>
            <person name="Koechel H.G."/>
        </authorList>
    </citation>
    <scope>NUCLEOTIDE SEQUENCE [GENOMIC DNA]</scope>
</reference>
<comment type="function">
    <text evidence="1">Together with its co-chaperonin GroES, plays an essential role in assisting protein folding. The GroEL-GroES system forms a nano-cage that allows encapsulation of the non-native substrate proteins and provides a physical environment optimized to promote and accelerate protein folding.</text>
</comment>
<comment type="catalytic activity">
    <reaction evidence="1">
        <text>ATP + H2O + a folded polypeptide = ADP + phosphate + an unfolded polypeptide.</text>
        <dbReference type="EC" id="5.6.1.7"/>
    </reaction>
</comment>
<comment type="subunit">
    <text evidence="1">Forms a cylinder of 14 subunits composed of two heptameric rings stacked back-to-back. Interacts with the co-chaperonin GroES.</text>
</comment>
<comment type="subcellular location">
    <subcellularLocation>
        <location evidence="1">Cytoplasm</location>
    </subcellularLocation>
</comment>
<comment type="similarity">
    <text evidence="1">Belongs to the chaperonin (HSP60) family.</text>
</comment>
<proteinExistence type="inferred from homology"/>
<accession>Q9AFC5</accession>
<evidence type="ECO:0000255" key="1">
    <source>
        <dbReference type="HAMAP-Rule" id="MF_00600"/>
    </source>
</evidence>
<gene>
    <name evidence="1" type="primary">groEL</name>
    <name evidence="1" type="synonym">groL</name>
    <name type="synonym">hsp60</name>
</gene>
<sequence>MAKTIAYDEEARRGLERGLNSLADAVKVTLGPKGRNVVLEKKWGAPTITNDGVSIAKEIELEDPYEKIGAELVKEVAKKTDDVAGDGTTTATVLAQALVREGLRNVAAGANPLGRKRGIEKAVEAVTAKLLDTAKEVETKEQIAATAGISAGDAAIGELIAEAMDKVGKEGVITVEESNTFGLQLELTEGMRFDKGYISGYFATDPERQEAVLEDPYILLVGSKVSTVKDLLPLLEKVIQAGKPLLIIAEDVEGEALSTLVVKKILGTFKSVAVKAPGGGDRRKAQLADIAILTGGQVISEEVGLSLETAGIELLGQARKVVVTKDETTIVEGAGDAEAIAGRVSQIRAEIENSDSDYDREKLQERLAKLAGGVAVIKAGAATEVELKERKHRIEDAVRNAKAAVEEGIVAGGGVAFLQSVPALDDFKLEGDEATGANIVRVALSAPLKQIAFNAGLEPGVLAEKVSNLPAGQGLNAQTNEDEDLLAAGVADPVKVTRSALQNAASIAALFLTTEAVVADKPEKASAAPATGHRFKMGGMDF</sequence>
<feature type="chain" id="PRO_0000063462" description="Chaperonin GroEL">
    <location>
        <begin position="1"/>
        <end position="542"/>
    </location>
</feature>
<feature type="binding site" evidence="1">
    <location>
        <begin position="29"/>
        <end position="32"/>
    </location>
    <ligand>
        <name>ATP</name>
        <dbReference type="ChEBI" id="CHEBI:30616"/>
    </ligand>
</feature>
<feature type="binding site" evidence="1">
    <location>
        <begin position="86"/>
        <end position="90"/>
    </location>
    <ligand>
        <name>ATP</name>
        <dbReference type="ChEBI" id="CHEBI:30616"/>
    </ligand>
</feature>
<feature type="binding site" evidence="1">
    <location>
        <position position="413"/>
    </location>
    <ligand>
        <name>ATP</name>
        <dbReference type="ChEBI" id="CHEBI:30616"/>
    </ligand>
</feature>
<feature type="binding site" evidence="1">
    <location>
        <position position="492"/>
    </location>
    <ligand>
        <name>ATP</name>
        <dbReference type="ChEBI" id="CHEBI:30616"/>
    </ligand>
</feature>